<feature type="chain" id="PRO_0000297820" description="Endoribonuclease SymE">
    <location>
        <begin position="1"/>
        <end position="113"/>
    </location>
</feature>
<feature type="domain" description="SpoVT-AbrB" evidence="2">
    <location>
        <begin position="29"/>
        <end position="74"/>
    </location>
</feature>
<evidence type="ECO:0000255" key="1">
    <source>
        <dbReference type="HAMAP-Rule" id="MF_01193"/>
    </source>
</evidence>
<evidence type="ECO:0000255" key="2">
    <source>
        <dbReference type="PROSITE-ProRule" id="PRU01076"/>
    </source>
</evidence>
<reference key="1">
    <citation type="journal article" date="2006" name="Mol. Microbiol.">
        <title>Role of pathogenicity island-associated integrases in the genome plasticity of uropathogenic Escherichia coli strain 536.</title>
        <authorList>
            <person name="Hochhut B."/>
            <person name="Wilde C."/>
            <person name="Balling G."/>
            <person name="Middendorf B."/>
            <person name="Dobrindt U."/>
            <person name="Brzuszkiewicz E."/>
            <person name="Gottschalk G."/>
            <person name="Carniel E."/>
            <person name="Hacker J."/>
        </authorList>
    </citation>
    <scope>NUCLEOTIDE SEQUENCE [LARGE SCALE GENOMIC DNA]</scope>
    <source>
        <strain>536 / UPEC</strain>
    </source>
</reference>
<protein>
    <recommendedName>
        <fullName evidence="1">Endoribonuclease SymE</fullName>
        <ecNumber evidence="1">3.1.-.-</ecNumber>
    </recommendedName>
</protein>
<comment type="function">
    <text evidence="1">Involved in the degradation and recycling of damaged RNA. It is itself a target for degradation by the ATP-dependent protease Lon.</text>
</comment>
<comment type="subcellular location">
    <subcellularLocation>
        <location evidence="1">Cytoplasm</location>
    </subcellularLocation>
</comment>
<comment type="similarity">
    <text evidence="1">Belongs to the SymE family.</text>
</comment>
<name>SYME_ECOL5</name>
<sequence>MTDTHSIAQPFEAEVSPANNRQLTVSYASRYPDYSRIPAITLKGQWLEAAGFATGTAVDVKVMEGCIVLTAQPPAAAESELMQSLRQVCKLSARKQRQVQEFIGVIAGKQKVA</sequence>
<keyword id="KW-0963">Cytoplasm</keyword>
<keyword id="KW-0238">DNA-binding</keyword>
<keyword id="KW-0255">Endonuclease</keyword>
<keyword id="KW-0378">Hydrolase</keyword>
<keyword id="KW-0540">Nuclease</keyword>
<keyword id="KW-0694">RNA-binding</keyword>
<proteinExistence type="inferred from homology"/>
<organism>
    <name type="scientific">Escherichia coli O6:K15:H31 (strain 536 / UPEC)</name>
    <dbReference type="NCBI Taxonomy" id="362663"/>
    <lineage>
        <taxon>Bacteria</taxon>
        <taxon>Pseudomonadati</taxon>
        <taxon>Pseudomonadota</taxon>
        <taxon>Gammaproteobacteria</taxon>
        <taxon>Enterobacterales</taxon>
        <taxon>Enterobacteriaceae</taxon>
        <taxon>Escherichia</taxon>
    </lineage>
</organism>
<dbReference type="EC" id="3.1.-.-" evidence="1"/>
<dbReference type="EMBL" id="CP000247">
    <property type="protein sequence ID" value="ABG72611.1"/>
    <property type="molecule type" value="Genomic_DNA"/>
</dbReference>
<dbReference type="RefSeq" id="WP_000132614.1">
    <property type="nucleotide sequence ID" value="NC_008253.1"/>
</dbReference>
<dbReference type="KEGG" id="ecp:ECP_4675"/>
<dbReference type="HOGENOM" id="CLU_151239_0_0_6"/>
<dbReference type="Proteomes" id="UP000009182">
    <property type="component" value="Chromosome"/>
</dbReference>
<dbReference type="GO" id="GO:0005737">
    <property type="term" value="C:cytoplasm"/>
    <property type="evidence" value="ECO:0007669"/>
    <property type="project" value="UniProtKB-SubCell"/>
</dbReference>
<dbReference type="GO" id="GO:0003677">
    <property type="term" value="F:DNA binding"/>
    <property type="evidence" value="ECO:0007669"/>
    <property type="project" value="UniProtKB-KW"/>
</dbReference>
<dbReference type="GO" id="GO:0003723">
    <property type="term" value="F:RNA binding"/>
    <property type="evidence" value="ECO:0007669"/>
    <property type="project" value="UniProtKB-KW"/>
</dbReference>
<dbReference type="GO" id="GO:0004521">
    <property type="term" value="F:RNA endonuclease activity"/>
    <property type="evidence" value="ECO:0007669"/>
    <property type="project" value="UniProtKB-UniRule"/>
</dbReference>
<dbReference type="GO" id="GO:0016070">
    <property type="term" value="P:RNA metabolic process"/>
    <property type="evidence" value="ECO:0007669"/>
    <property type="project" value="InterPro"/>
</dbReference>
<dbReference type="HAMAP" id="MF_01193">
    <property type="entry name" value="Endoribonucl_SymE"/>
    <property type="match status" value="1"/>
</dbReference>
<dbReference type="InterPro" id="IPR007159">
    <property type="entry name" value="SpoVT-AbrB_dom"/>
</dbReference>
<dbReference type="InterPro" id="IPR014944">
    <property type="entry name" value="Toxin_SymE-like"/>
</dbReference>
<dbReference type="InterPro" id="IPR020883">
    <property type="entry name" value="TypeI_TA_SymE"/>
</dbReference>
<dbReference type="NCBIfam" id="NF010128">
    <property type="entry name" value="PRK13605.1"/>
    <property type="match status" value="1"/>
</dbReference>
<dbReference type="Pfam" id="PF08845">
    <property type="entry name" value="SymE_toxin"/>
    <property type="match status" value="1"/>
</dbReference>
<dbReference type="PROSITE" id="PS51740">
    <property type="entry name" value="SPOVT_ABRB"/>
    <property type="match status" value="1"/>
</dbReference>
<gene>
    <name evidence="1" type="primary">symE</name>
    <name type="ordered locus">ECP_4675</name>
</gene>
<accession>Q0T8W8</accession>